<evidence type="ECO:0000255" key="1">
    <source>
        <dbReference type="HAMAP-Rule" id="MF_00445"/>
    </source>
</evidence>
<protein>
    <recommendedName>
        <fullName evidence="1">NADH-quinone oxidoreductase subunit N</fullName>
        <ecNumber evidence="1">7.1.1.-</ecNumber>
    </recommendedName>
    <alternativeName>
        <fullName evidence="1">NADH dehydrogenase I subunit N</fullName>
    </alternativeName>
    <alternativeName>
        <fullName evidence="1">NDH-1 subunit N</fullName>
    </alternativeName>
</protein>
<proteinExistence type="inferred from homology"/>
<sequence>MTITPQNLIALLPLLIVGLTVVVVMLSIAWRRNHFLNATLSVIGLNAALVSLWFVGQAGAMDVTPLMRVDGFAMLYTGLVLLASLATCTFAYPWLEGYNDNKDEFYLLVLIAALGGILLANANHLASLFLGIELISLPLFGLVGYAFRQKRSLEASIKYTILSAAASSFLLFGMALVYAQSGDLSFVALGKNLGDGMLNEPLLLAGFGLMIVGLGFKLSLVPFHLWTPDVYQGAPAPVSTFLATASKIAIFGVVMRLFLYAPVGDSEAIRVVLAIIAFASIIFGNLMALSQTNIKRLLGYSSISHLGYLLVALIALQTGEMSMEAVGVYLAGYLFSSLGAFGVVSLMSSPYRGPDADSLFSYRGLFWHRPILAAVMTVMMLSLAGIPMTLGFIGKFYVLAVGVQAHLWWLVGAVVVGSAIGLYYYLRVAVSLYLHAPEQPGRDAPSNWQYSAGGIVVLISALLVLVLGVWPQPLISIVRLAMPLM</sequence>
<dbReference type="EC" id="7.1.1.-" evidence="1"/>
<dbReference type="EMBL" id="FM180568">
    <property type="protein sequence ID" value="CAS09964.1"/>
    <property type="molecule type" value="Genomic_DNA"/>
</dbReference>
<dbReference type="RefSeq" id="WP_000156701.1">
    <property type="nucleotide sequence ID" value="NC_011601.1"/>
</dbReference>
<dbReference type="SMR" id="B7UFT4"/>
<dbReference type="GeneID" id="75205678"/>
<dbReference type="KEGG" id="ecg:E2348C_2416"/>
<dbReference type="HOGENOM" id="CLU_007100_1_5_6"/>
<dbReference type="Proteomes" id="UP000008205">
    <property type="component" value="Chromosome"/>
</dbReference>
<dbReference type="GO" id="GO:0005886">
    <property type="term" value="C:plasma membrane"/>
    <property type="evidence" value="ECO:0007669"/>
    <property type="project" value="UniProtKB-SubCell"/>
</dbReference>
<dbReference type="GO" id="GO:0008137">
    <property type="term" value="F:NADH dehydrogenase (ubiquinone) activity"/>
    <property type="evidence" value="ECO:0007669"/>
    <property type="project" value="InterPro"/>
</dbReference>
<dbReference type="GO" id="GO:0050136">
    <property type="term" value="F:NADH:ubiquinone reductase (non-electrogenic) activity"/>
    <property type="evidence" value="ECO:0007669"/>
    <property type="project" value="UniProtKB-UniRule"/>
</dbReference>
<dbReference type="GO" id="GO:0048038">
    <property type="term" value="F:quinone binding"/>
    <property type="evidence" value="ECO:0007669"/>
    <property type="project" value="UniProtKB-KW"/>
</dbReference>
<dbReference type="GO" id="GO:0042773">
    <property type="term" value="P:ATP synthesis coupled electron transport"/>
    <property type="evidence" value="ECO:0007669"/>
    <property type="project" value="InterPro"/>
</dbReference>
<dbReference type="HAMAP" id="MF_00445">
    <property type="entry name" value="NDH1_NuoN_1"/>
    <property type="match status" value="1"/>
</dbReference>
<dbReference type="InterPro" id="IPR010096">
    <property type="entry name" value="NADH-Q_OxRdtase_suN/2"/>
</dbReference>
<dbReference type="InterPro" id="IPR001750">
    <property type="entry name" value="ND/Mrp_TM"/>
</dbReference>
<dbReference type="NCBIfam" id="TIGR01770">
    <property type="entry name" value="NDH_I_N"/>
    <property type="match status" value="1"/>
</dbReference>
<dbReference type="NCBIfam" id="NF004439">
    <property type="entry name" value="PRK05777.1-1"/>
    <property type="match status" value="1"/>
</dbReference>
<dbReference type="PANTHER" id="PTHR22773">
    <property type="entry name" value="NADH DEHYDROGENASE"/>
    <property type="match status" value="1"/>
</dbReference>
<dbReference type="Pfam" id="PF00361">
    <property type="entry name" value="Proton_antipo_M"/>
    <property type="match status" value="1"/>
</dbReference>
<name>NUON_ECO27</name>
<accession>B7UFT4</accession>
<comment type="function">
    <text evidence="1">NDH-1 shuttles electrons from NADH, via FMN and iron-sulfur (Fe-S) centers, to quinones in the respiratory chain. The immediate electron acceptor for the enzyme in this species is believed to be ubiquinone. Couples the redox reaction to proton translocation (for every two electrons transferred, four hydrogen ions are translocated across the cytoplasmic membrane), and thus conserves the redox energy in a proton gradient.</text>
</comment>
<comment type="catalytic activity">
    <reaction evidence="1">
        <text>a quinone + NADH + 5 H(+)(in) = a quinol + NAD(+) + 4 H(+)(out)</text>
        <dbReference type="Rhea" id="RHEA:57888"/>
        <dbReference type="ChEBI" id="CHEBI:15378"/>
        <dbReference type="ChEBI" id="CHEBI:24646"/>
        <dbReference type="ChEBI" id="CHEBI:57540"/>
        <dbReference type="ChEBI" id="CHEBI:57945"/>
        <dbReference type="ChEBI" id="CHEBI:132124"/>
    </reaction>
</comment>
<comment type="subunit">
    <text evidence="1">NDH-1 is composed of 13 different subunits. Subunits NuoA, H, J, K, L, M, N constitute the membrane sector of the complex.</text>
</comment>
<comment type="subcellular location">
    <subcellularLocation>
        <location evidence="1">Cell inner membrane</location>
        <topology evidence="1">Multi-pass membrane protein</topology>
    </subcellularLocation>
</comment>
<comment type="similarity">
    <text evidence="1">Belongs to the complex I subunit 2 family.</text>
</comment>
<keyword id="KW-0997">Cell inner membrane</keyword>
<keyword id="KW-1003">Cell membrane</keyword>
<keyword id="KW-0472">Membrane</keyword>
<keyword id="KW-0520">NAD</keyword>
<keyword id="KW-0874">Quinone</keyword>
<keyword id="KW-1185">Reference proteome</keyword>
<keyword id="KW-1278">Translocase</keyword>
<keyword id="KW-0812">Transmembrane</keyword>
<keyword id="KW-1133">Transmembrane helix</keyword>
<keyword id="KW-0813">Transport</keyword>
<keyword id="KW-0830">Ubiquinone</keyword>
<reference key="1">
    <citation type="journal article" date="2009" name="J. Bacteriol.">
        <title>Complete genome sequence and comparative genome analysis of enteropathogenic Escherichia coli O127:H6 strain E2348/69.</title>
        <authorList>
            <person name="Iguchi A."/>
            <person name="Thomson N.R."/>
            <person name="Ogura Y."/>
            <person name="Saunders D."/>
            <person name="Ooka T."/>
            <person name="Henderson I.R."/>
            <person name="Harris D."/>
            <person name="Asadulghani M."/>
            <person name="Kurokawa K."/>
            <person name="Dean P."/>
            <person name="Kenny B."/>
            <person name="Quail M.A."/>
            <person name="Thurston S."/>
            <person name="Dougan G."/>
            <person name="Hayashi T."/>
            <person name="Parkhill J."/>
            <person name="Frankel G."/>
        </authorList>
    </citation>
    <scope>NUCLEOTIDE SEQUENCE [LARGE SCALE GENOMIC DNA]</scope>
    <source>
        <strain>E2348/69 / EPEC</strain>
    </source>
</reference>
<gene>
    <name evidence="1" type="primary">nuoN</name>
    <name type="ordered locus">E2348C_2416</name>
</gene>
<feature type="chain" id="PRO_1000184914" description="NADH-quinone oxidoreductase subunit N">
    <location>
        <begin position="1"/>
        <end position="485"/>
    </location>
</feature>
<feature type="transmembrane region" description="Helical" evidence="1">
    <location>
        <begin position="8"/>
        <end position="28"/>
    </location>
</feature>
<feature type="transmembrane region" description="Helical" evidence="1">
    <location>
        <begin position="35"/>
        <end position="55"/>
    </location>
</feature>
<feature type="transmembrane region" description="Helical" evidence="1">
    <location>
        <begin position="71"/>
        <end position="91"/>
    </location>
</feature>
<feature type="transmembrane region" description="Helical" evidence="1">
    <location>
        <begin position="105"/>
        <end position="125"/>
    </location>
</feature>
<feature type="transmembrane region" description="Helical" evidence="1">
    <location>
        <begin position="127"/>
        <end position="147"/>
    </location>
</feature>
<feature type="transmembrane region" description="Helical" evidence="1">
    <location>
        <begin position="159"/>
        <end position="179"/>
    </location>
</feature>
<feature type="transmembrane region" description="Helical" evidence="1">
    <location>
        <begin position="203"/>
        <end position="223"/>
    </location>
</feature>
<feature type="transmembrane region" description="Helical" evidence="1">
    <location>
        <begin position="235"/>
        <end position="255"/>
    </location>
</feature>
<feature type="transmembrane region" description="Helical" evidence="1">
    <location>
        <begin position="271"/>
        <end position="291"/>
    </location>
</feature>
<feature type="transmembrane region" description="Helical" evidence="1">
    <location>
        <begin position="297"/>
        <end position="317"/>
    </location>
</feature>
<feature type="transmembrane region" description="Helical" evidence="1">
    <location>
        <begin position="326"/>
        <end position="346"/>
    </location>
</feature>
<feature type="transmembrane region" description="Helical" evidence="1">
    <location>
        <begin position="373"/>
        <end position="393"/>
    </location>
</feature>
<feature type="transmembrane region" description="Helical" evidence="1">
    <location>
        <begin position="408"/>
        <end position="430"/>
    </location>
</feature>
<feature type="transmembrane region" description="Helical" evidence="1">
    <location>
        <begin position="455"/>
        <end position="475"/>
    </location>
</feature>
<organism>
    <name type="scientific">Escherichia coli O127:H6 (strain E2348/69 / EPEC)</name>
    <dbReference type="NCBI Taxonomy" id="574521"/>
    <lineage>
        <taxon>Bacteria</taxon>
        <taxon>Pseudomonadati</taxon>
        <taxon>Pseudomonadota</taxon>
        <taxon>Gammaproteobacteria</taxon>
        <taxon>Enterobacterales</taxon>
        <taxon>Enterobacteriaceae</taxon>
        <taxon>Escherichia</taxon>
    </lineage>
</organism>